<sequence length="610" mass="68254">MGNTCVGPSRNGFLQSVSAAMWRPRDGDDSASMSNGDIASEAVSGELRSRLSDEVQNKPPEQVTMPKPGTDVETKDREIRTESKPETLEEISLESKPETKQETKSETKPESKPDPPAKPKKPKHMKRVSSAGLRTESVLQRKTENFKEFYSLGRKLGQGQFGTTFLCVEKTTGKEFACKSIAKRKLLTDEDVEDVRREIQIMHHLAGHPNVISIKGAYEDVVAVHLVMECCAGGELFDRIIQRGHYTERKAAELTRTIVGVVEACHSLGVMHRDLKPENFLFVSKHEDSLLKTIDFGLSMFFKPDDVFTDVVGSPYYVAPEVLRKRYGPEADVWSAGVIVYILLSGVPPFWAETEQGIFEQVLHGDLDFSSDPWPSISESAKDLVRKMLVRDPKKRLTAHQVLCHPWVQVDGVAPDKPLDSAVLSRMKQFSAMNKFKKMALRVIAESLSEEEIAGLKEMFNMIDADKSGQITFEELKAGLKRVGANLKESEILDLMQAADVDNSGTIDYKEFIAATLHLNKIEREDHLFAAFTYFDKDGSGYITPDELQQACEEFGVEDVRIEELMRDVDQDNDGRIDYNEFVAMMQKGSITGGPVKMGLEKSFSIALKL</sequence>
<dbReference type="EC" id="2.7.11.1"/>
<dbReference type="EMBL" id="L14771">
    <property type="protein sequence ID" value="AAA32761.1"/>
    <property type="molecule type" value="mRNA"/>
</dbReference>
<dbReference type="EMBL" id="AB008271">
    <property type="protein sequence ID" value="BAB08991.1"/>
    <property type="molecule type" value="Genomic_DNA"/>
</dbReference>
<dbReference type="EMBL" id="CP002688">
    <property type="protein sequence ID" value="AED90798.1"/>
    <property type="molecule type" value="Genomic_DNA"/>
</dbReference>
<dbReference type="EMBL" id="AK118706">
    <property type="protein sequence ID" value="BAC43300.1"/>
    <property type="molecule type" value="mRNA"/>
</dbReference>
<dbReference type="EMBL" id="BT005932">
    <property type="protein sequence ID" value="AAO64867.1"/>
    <property type="molecule type" value="mRNA"/>
</dbReference>
<dbReference type="PIR" id="A49082">
    <property type="entry name" value="A49082"/>
</dbReference>
<dbReference type="RefSeq" id="NP_196107.1">
    <property type="nucleotide sequence ID" value="NM_120569.3"/>
</dbReference>
<dbReference type="PDB" id="2AAO">
    <property type="method" value="X-ray"/>
    <property type="resolution" value="2.00 A"/>
    <property type="chains" value="A/B=428-593"/>
</dbReference>
<dbReference type="PDBsum" id="2AAO"/>
<dbReference type="BMRB" id="Q06850"/>
<dbReference type="SMR" id="Q06850"/>
<dbReference type="BioGRID" id="15645">
    <property type="interactions" value="65"/>
</dbReference>
<dbReference type="FunCoup" id="Q06850">
    <property type="interactions" value="2301"/>
</dbReference>
<dbReference type="IntAct" id="Q06850">
    <property type="interactions" value="2"/>
</dbReference>
<dbReference type="STRING" id="3702.Q06850"/>
<dbReference type="iPTMnet" id="Q06850"/>
<dbReference type="PaxDb" id="3702-AT5G04870.1"/>
<dbReference type="ProteomicsDB" id="241221"/>
<dbReference type="EnsemblPlants" id="AT5G04870.1">
    <property type="protein sequence ID" value="AT5G04870.1"/>
    <property type="gene ID" value="AT5G04870"/>
</dbReference>
<dbReference type="GeneID" id="830366"/>
<dbReference type="Gramene" id="AT5G04870.1">
    <property type="protein sequence ID" value="AT5G04870.1"/>
    <property type="gene ID" value="AT5G04870"/>
</dbReference>
<dbReference type="KEGG" id="ath:AT5G04870"/>
<dbReference type="Araport" id="AT5G04870"/>
<dbReference type="TAIR" id="AT5G04870">
    <property type="gene designation" value="CPK1"/>
</dbReference>
<dbReference type="eggNOG" id="KOG0032">
    <property type="taxonomic scope" value="Eukaryota"/>
</dbReference>
<dbReference type="HOGENOM" id="CLU_000288_37_1_1"/>
<dbReference type="InParanoid" id="Q06850"/>
<dbReference type="OMA" id="AMNHIWI"/>
<dbReference type="OrthoDB" id="40902at2759"/>
<dbReference type="PhylomeDB" id="Q06850"/>
<dbReference type="BRENDA" id="2.7.11.1">
    <property type="organism ID" value="399"/>
</dbReference>
<dbReference type="EvolutionaryTrace" id="Q06850"/>
<dbReference type="PRO" id="PR:Q06850"/>
<dbReference type="Proteomes" id="UP000006548">
    <property type="component" value="Chromosome 5"/>
</dbReference>
<dbReference type="ExpressionAtlas" id="Q06850">
    <property type="expression patterns" value="baseline and differential"/>
</dbReference>
<dbReference type="GO" id="GO:0005778">
    <property type="term" value="C:peroxisomal membrane"/>
    <property type="evidence" value="ECO:0000314"/>
    <property type="project" value="UniProtKB"/>
</dbReference>
<dbReference type="GO" id="GO:0005777">
    <property type="term" value="C:peroxisome"/>
    <property type="evidence" value="ECO:0000314"/>
    <property type="project" value="TAIR"/>
</dbReference>
<dbReference type="GO" id="GO:0005524">
    <property type="term" value="F:ATP binding"/>
    <property type="evidence" value="ECO:0007669"/>
    <property type="project" value="UniProtKB-KW"/>
</dbReference>
<dbReference type="GO" id="GO:0005509">
    <property type="term" value="F:calcium ion binding"/>
    <property type="evidence" value="ECO:0000314"/>
    <property type="project" value="UniProtKB"/>
</dbReference>
<dbReference type="GO" id="GO:0004672">
    <property type="term" value="F:protein kinase activity"/>
    <property type="evidence" value="ECO:0000314"/>
    <property type="project" value="TAIR"/>
</dbReference>
<dbReference type="GO" id="GO:0106310">
    <property type="term" value="F:protein serine kinase activity"/>
    <property type="evidence" value="ECO:0007669"/>
    <property type="project" value="RHEA"/>
</dbReference>
<dbReference type="GO" id="GO:0004674">
    <property type="term" value="F:protein serine/threonine kinase activity"/>
    <property type="evidence" value="ECO:0007005"/>
    <property type="project" value="TAIR"/>
</dbReference>
<dbReference type="GO" id="GO:0046777">
    <property type="term" value="P:protein autophosphorylation"/>
    <property type="evidence" value="ECO:0000314"/>
    <property type="project" value="TAIR"/>
</dbReference>
<dbReference type="GO" id="GO:0006468">
    <property type="term" value="P:protein phosphorylation"/>
    <property type="evidence" value="ECO:0000314"/>
    <property type="project" value="TAIR"/>
</dbReference>
<dbReference type="GO" id="GO:1900055">
    <property type="term" value="P:regulation of leaf senescence"/>
    <property type="evidence" value="ECO:0000315"/>
    <property type="project" value="TAIR"/>
</dbReference>
<dbReference type="CDD" id="cd05117">
    <property type="entry name" value="STKc_CAMK"/>
    <property type="match status" value="1"/>
</dbReference>
<dbReference type="FunFam" id="1.10.238.10:FF:000015">
    <property type="entry name" value="Calcium-dependent protein kinase 1"/>
    <property type="match status" value="1"/>
</dbReference>
<dbReference type="FunFam" id="3.30.200.20:FF:000004">
    <property type="entry name" value="Calcium-dependent protein kinase 1"/>
    <property type="match status" value="1"/>
</dbReference>
<dbReference type="FunFam" id="1.10.510.10:FF:000249">
    <property type="entry name" value="Calcium-dependent protein kinase SK5"/>
    <property type="match status" value="1"/>
</dbReference>
<dbReference type="Gene3D" id="1.10.238.10">
    <property type="entry name" value="EF-hand"/>
    <property type="match status" value="1"/>
</dbReference>
<dbReference type="Gene3D" id="3.30.200.20">
    <property type="entry name" value="Phosphorylase Kinase, domain 1"/>
    <property type="match status" value="1"/>
</dbReference>
<dbReference type="Gene3D" id="1.10.510.10">
    <property type="entry name" value="Transferase(Phosphotransferase) domain 1"/>
    <property type="match status" value="1"/>
</dbReference>
<dbReference type="InterPro" id="IPR050205">
    <property type="entry name" value="CDPK_Ser/Thr_kinases"/>
</dbReference>
<dbReference type="InterPro" id="IPR011992">
    <property type="entry name" value="EF-hand-dom_pair"/>
</dbReference>
<dbReference type="InterPro" id="IPR018247">
    <property type="entry name" value="EF_Hand_1_Ca_BS"/>
</dbReference>
<dbReference type="InterPro" id="IPR002048">
    <property type="entry name" value="EF_hand_dom"/>
</dbReference>
<dbReference type="InterPro" id="IPR011009">
    <property type="entry name" value="Kinase-like_dom_sf"/>
</dbReference>
<dbReference type="InterPro" id="IPR000719">
    <property type="entry name" value="Prot_kinase_dom"/>
</dbReference>
<dbReference type="InterPro" id="IPR017441">
    <property type="entry name" value="Protein_kinase_ATP_BS"/>
</dbReference>
<dbReference type="InterPro" id="IPR008271">
    <property type="entry name" value="Ser/Thr_kinase_AS"/>
</dbReference>
<dbReference type="PANTHER" id="PTHR24349">
    <property type="entry name" value="SERINE/THREONINE-PROTEIN KINASE"/>
    <property type="match status" value="1"/>
</dbReference>
<dbReference type="Pfam" id="PF13499">
    <property type="entry name" value="EF-hand_7"/>
    <property type="match status" value="2"/>
</dbReference>
<dbReference type="Pfam" id="PF00069">
    <property type="entry name" value="Pkinase"/>
    <property type="match status" value="1"/>
</dbReference>
<dbReference type="SMART" id="SM00054">
    <property type="entry name" value="EFh"/>
    <property type="match status" value="4"/>
</dbReference>
<dbReference type="SMART" id="SM00220">
    <property type="entry name" value="S_TKc"/>
    <property type="match status" value="1"/>
</dbReference>
<dbReference type="SUPFAM" id="SSF47473">
    <property type="entry name" value="EF-hand"/>
    <property type="match status" value="1"/>
</dbReference>
<dbReference type="SUPFAM" id="SSF56112">
    <property type="entry name" value="Protein kinase-like (PK-like)"/>
    <property type="match status" value="1"/>
</dbReference>
<dbReference type="PROSITE" id="PS00018">
    <property type="entry name" value="EF_HAND_1"/>
    <property type="match status" value="4"/>
</dbReference>
<dbReference type="PROSITE" id="PS50222">
    <property type="entry name" value="EF_HAND_2"/>
    <property type="match status" value="4"/>
</dbReference>
<dbReference type="PROSITE" id="PS00107">
    <property type="entry name" value="PROTEIN_KINASE_ATP"/>
    <property type="match status" value="1"/>
</dbReference>
<dbReference type="PROSITE" id="PS50011">
    <property type="entry name" value="PROTEIN_KINASE_DOM"/>
    <property type="match status" value="1"/>
</dbReference>
<dbReference type="PROSITE" id="PS00108">
    <property type="entry name" value="PROTEIN_KINASE_ST"/>
    <property type="match status" value="1"/>
</dbReference>
<proteinExistence type="evidence at protein level"/>
<accession>Q06850</accession>
<accession>Q541W0</accession>
<gene>
    <name type="primary">CPK1</name>
    <name type="synonym">AK1</name>
    <name type="ordered locus">At5g04870</name>
    <name type="ORF">MUK11.19</name>
</gene>
<feature type="initiator methionine" description="Removed" evidence="2">
    <location>
        <position position="1"/>
    </location>
</feature>
<feature type="chain" id="PRO_0000085827" description="Calcium-dependent protein kinase 1">
    <location>
        <begin position="2"/>
        <end position="610"/>
    </location>
</feature>
<feature type="domain" description="Protein kinase" evidence="3">
    <location>
        <begin position="150"/>
        <end position="408"/>
    </location>
</feature>
<feature type="domain" description="EF-hand 1" evidence="4">
    <location>
        <begin position="451"/>
        <end position="486"/>
    </location>
</feature>
<feature type="domain" description="EF-hand 2" evidence="4">
    <location>
        <begin position="487"/>
        <end position="522"/>
    </location>
</feature>
<feature type="domain" description="EF-hand 3" evidence="4">
    <location>
        <begin position="523"/>
        <end position="558"/>
    </location>
</feature>
<feature type="domain" description="EF-hand 4" evidence="4">
    <location>
        <begin position="559"/>
        <end position="592"/>
    </location>
</feature>
<feature type="region of interest" description="Disordered" evidence="6">
    <location>
        <begin position="17"/>
        <end position="133"/>
    </location>
</feature>
<feature type="region of interest" description="Autoinhibitory domain" evidence="7">
    <location>
        <begin position="414"/>
        <end position="444"/>
    </location>
</feature>
<feature type="compositionally biased region" description="Basic and acidic residues" evidence="6">
    <location>
        <begin position="47"/>
        <end position="56"/>
    </location>
</feature>
<feature type="compositionally biased region" description="Basic and acidic residues" evidence="6">
    <location>
        <begin position="70"/>
        <end position="117"/>
    </location>
</feature>
<feature type="compositionally biased region" description="Basic residues" evidence="6">
    <location>
        <begin position="118"/>
        <end position="127"/>
    </location>
</feature>
<feature type="active site" description="Proton acceptor" evidence="3 5">
    <location>
        <position position="274"/>
    </location>
</feature>
<feature type="binding site" evidence="3">
    <location>
        <begin position="156"/>
        <end position="164"/>
    </location>
    <ligand>
        <name>ATP</name>
        <dbReference type="ChEBI" id="CHEBI:30616"/>
    </ligand>
</feature>
<feature type="binding site" evidence="3">
    <location>
        <position position="179"/>
    </location>
    <ligand>
        <name>ATP</name>
        <dbReference type="ChEBI" id="CHEBI:30616"/>
    </ligand>
</feature>
<feature type="binding site" evidence="4 10 11 15">
    <location>
        <position position="464"/>
    </location>
    <ligand>
        <name>Ca(2+)</name>
        <dbReference type="ChEBI" id="CHEBI:29108"/>
        <label>1</label>
    </ligand>
</feature>
<feature type="binding site" evidence="4 10 11 15">
    <location>
        <position position="466"/>
    </location>
    <ligand>
        <name>Ca(2+)</name>
        <dbReference type="ChEBI" id="CHEBI:29108"/>
        <label>1</label>
    </ligand>
</feature>
<feature type="binding site" evidence="4 10 11 15">
    <location>
        <position position="468"/>
    </location>
    <ligand>
        <name>Ca(2+)</name>
        <dbReference type="ChEBI" id="CHEBI:29108"/>
        <label>1</label>
    </ligand>
</feature>
<feature type="binding site" evidence="4 10 11 15">
    <location>
        <position position="470"/>
    </location>
    <ligand>
        <name>Ca(2+)</name>
        <dbReference type="ChEBI" id="CHEBI:29108"/>
        <label>1</label>
    </ligand>
</feature>
<feature type="binding site" evidence="4 10 11 15">
    <location>
        <position position="475"/>
    </location>
    <ligand>
        <name>Ca(2+)</name>
        <dbReference type="ChEBI" id="CHEBI:29108"/>
        <label>1</label>
    </ligand>
</feature>
<feature type="binding site" evidence="4 10 11 15">
    <location>
        <position position="500"/>
    </location>
    <ligand>
        <name>Ca(2+)</name>
        <dbReference type="ChEBI" id="CHEBI:29108"/>
        <label>2</label>
    </ligand>
</feature>
<feature type="binding site" evidence="4 10 11 15">
    <location>
        <position position="502"/>
    </location>
    <ligand>
        <name>Ca(2+)</name>
        <dbReference type="ChEBI" id="CHEBI:29108"/>
        <label>2</label>
    </ligand>
</feature>
<feature type="binding site" evidence="4 10 11 15">
    <location>
        <position position="504"/>
    </location>
    <ligand>
        <name>Ca(2+)</name>
        <dbReference type="ChEBI" id="CHEBI:29108"/>
        <label>2</label>
    </ligand>
</feature>
<feature type="binding site" evidence="4 10 11 15">
    <location>
        <position position="506"/>
    </location>
    <ligand>
        <name>Ca(2+)</name>
        <dbReference type="ChEBI" id="CHEBI:29108"/>
        <label>2</label>
    </ligand>
</feature>
<feature type="binding site" evidence="4 10 11 15">
    <location>
        <position position="511"/>
    </location>
    <ligand>
        <name>Ca(2+)</name>
        <dbReference type="ChEBI" id="CHEBI:29108"/>
        <label>2</label>
    </ligand>
</feature>
<feature type="binding site" evidence="4 10 11 15">
    <location>
        <position position="536"/>
    </location>
    <ligand>
        <name>Ca(2+)</name>
        <dbReference type="ChEBI" id="CHEBI:29108"/>
        <label>3</label>
    </ligand>
</feature>
<feature type="binding site" evidence="4 10 11 15">
    <location>
        <position position="538"/>
    </location>
    <ligand>
        <name>Ca(2+)</name>
        <dbReference type="ChEBI" id="CHEBI:29108"/>
        <label>3</label>
    </ligand>
</feature>
<feature type="binding site" evidence="4 10 11 15">
    <location>
        <position position="540"/>
    </location>
    <ligand>
        <name>Ca(2+)</name>
        <dbReference type="ChEBI" id="CHEBI:29108"/>
        <label>3</label>
    </ligand>
</feature>
<feature type="binding site" evidence="4 10 11 15">
    <location>
        <position position="542"/>
    </location>
    <ligand>
        <name>Ca(2+)</name>
        <dbReference type="ChEBI" id="CHEBI:29108"/>
        <label>3</label>
    </ligand>
</feature>
<feature type="binding site" evidence="4 10 11 15">
    <location>
        <position position="547"/>
    </location>
    <ligand>
        <name>Ca(2+)</name>
        <dbReference type="ChEBI" id="CHEBI:29108"/>
        <label>3</label>
    </ligand>
</feature>
<feature type="binding site" evidence="4 10 11 15">
    <location>
        <position position="570"/>
    </location>
    <ligand>
        <name>Ca(2+)</name>
        <dbReference type="ChEBI" id="CHEBI:29108"/>
        <label>4</label>
    </ligand>
</feature>
<feature type="binding site" evidence="4 10 11 15">
    <location>
        <position position="572"/>
    </location>
    <ligand>
        <name>Ca(2+)</name>
        <dbReference type="ChEBI" id="CHEBI:29108"/>
        <label>4</label>
    </ligand>
</feature>
<feature type="binding site" evidence="4 10 11 15">
    <location>
        <position position="574"/>
    </location>
    <ligand>
        <name>Ca(2+)</name>
        <dbReference type="ChEBI" id="CHEBI:29108"/>
        <label>4</label>
    </ligand>
</feature>
<feature type="binding site" evidence="4 10 11 15">
    <location>
        <position position="576"/>
    </location>
    <ligand>
        <name>Ca(2+)</name>
        <dbReference type="ChEBI" id="CHEBI:29108"/>
        <label>4</label>
    </ligand>
</feature>
<feature type="binding site" evidence="4 10 11 15">
    <location>
        <position position="581"/>
    </location>
    <ligand>
        <name>Ca(2+)</name>
        <dbReference type="ChEBI" id="CHEBI:29108"/>
        <label>4</label>
    </ligand>
</feature>
<feature type="modified residue" description="Phosphoserine" evidence="1">
    <location>
        <position position="314"/>
    </location>
</feature>
<feature type="lipid moiety-binding region" description="N-myristoyl glycine" evidence="9">
    <location>
        <position position="2"/>
    </location>
</feature>
<feature type="lipid moiety-binding region" description="S-palmitoyl cysteine" evidence="9">
    <location>
        <position position="5"/>
    </location>
</feature>
<feature type="mutagenesis site" description="Abolishes activation by calcium." evidence="7">
    <original>F</original>
    <variation>A</variation>
    <location>
        <position position="436"/>
    </location>
</feature>
<feature type="mutagenesis site" description="Abolishes activation by calcium." evidence="7">
    <original>VI</original>
    <variation>AA</variation>
    <location>
        <begin position="443"/>
        <end position="444"/>
    </location>
</feature>
<feature type="helix" evidence="16">
    <location>
        <begin position="434"/>
        <end position="447"/>
    </location>
</feature>
<feature type="helix" evidence="16">
    <location>
        <begin position="450"/>
        <end position="463"/>
    </location>
</feature>
<feature type="strand" evidence="16">
    <location>
        <begin position="469"/>
        <end position="471"/>
    </location>
</feature>
<feature type="helix" evidence="16">
    <location>
        <begin position="473"/>
        <end position="479"/>
    </location>
</feature>
<feature type="helix" evidence="16">
    <location>
        <begin position="480"/>
        <end position="483"/>
    </location>
</feature>
<feature type="helix" evidence="16">
    <location>
        <begin position="489"/>
        <end position="499"/>
    </location>
</feature>
<feature type="strand" evidence="16">
    <location>
        <begin position="505"/>
        <end position="507"/>
    </location>
</feature>
<feature type="helix" evidence="16">
    <location>
        <begin position="509"/>
        <end position="516"/>
    </location>
</feature>
<feature type="helix" evidence="16">
    <location>
        <begin position="520"/>
        <end position="523"/>
    </location>
</feature>
<feature type="helix" evidence="16">
    <location>
        <begin position="526"/>
        <end position="535"/>
    </location>
</feature>
<feature type="strand" evidence="16">
    <location>
        <begin position="540"/>
        <end position="543"/>
    </location>
</feature>
<feature type="helix" evidence="16">
    <location>
        <begin position="545"/>
        <end position="551"/>
    </location>
</feature>
<feature type="helix" evidence="16">
    <location>
        <begin position="565"/>
        <end position="569"/>
    </location>
</feature>
<feature type="strand" evidence="16">
    <location>
        <begin position="574"/>
        <end position="577"/>
    </location>
</feature>
<feature type="helix" evidence="16">
    <location>
        <begin position="579"/>
        <end position="586"/>
    </location>
</feature>
<evidence type="ECO:0000250" key="1">
    <source>
        <dbReference type="UniProtKB" id="Q9FKW4"/>
    </source>
</evidence>
<evidence type="ECO:0000255" key="2"/>
<evidence type="ECO:0000255" key="3">
    <source>
        <dbReference type="PROSITE-ProRule" id="PRU00159"/>
    </source>
</evidence>
<evidence type="ECO:0000255" key="4">
    <source>
        <dbReference type="PROSITE-ProRule" id="PRU00448"/>
    </source>
</evidence>
<evidence type="ECO:0000255" key="5">
    <source>
        <dbReference type="PROSITE-ProRule" id="PRU10027"/>
    </source>
</evidence>
<evidence type="ECO:0000256" key="6">
    <source>
        <dbReference type="SAM" id="MobiDB-lite"/>
    </source>
</evidence>
<evidence type="ECO:0000269" key="7">
    <source>
    </source>
</evidence>
<evidence type="ECO:0000269" key="8">
    <source>
    </source>
</evidence>
<evidence type="ECO:0000269" key="9">
    <source>
    </source>
</evidence>
<evidence type="ECO:0000269" key="10">
    <source>
    </source>
</evidence>
<evidence type="ECO:0000269" key="11">
    <source>
    </source>
</evidence>
<evidence type="ECO:0000269" key="12">
    <source>
    </source>
</evidence>
<evidence type="ECO:0000269" key="13">
    <source>
    </source>
</evidence>
<evidence type="ECO:0000269" key="14">
    <source>
    </source>
</evidence>
<evidence type="ECO:0007744" key="15">
    <source>
        <dbReference type="PDB" id="2AAO"/>
    </source>
</evidence>
<evidence type="ECO:0007829" key="16">
    <source>
        <dbReference type="PDB" id="2AAO"/>
    </source>
</evidence>
<comment type="function">
    <text evidence="7 8 12 13">May play a role in signal transduction pathways that involve calcium as a second messenger. Phosphorylates the Ca(2+)-ATPase ACA2 resulting in the inhibition of its calcium activation.</text>
</comment>
<comment type="catalytic activity">
    <reaction>
        <text>L-seryl-[protein] + ATP = O-phospho-L-seryl-[protein] + ADP + H(+)</text>
        <dbReference type="Rhea" id="RHEA:17989"/>
        <dbReference type="Rhea" id="RHEA-COMP:9863"/>
        <dbReference type="Rhea" id="RHEA-COMP:11604"/>
        <dbReference type="ChEBI" id="CHEBI:15378"/>
        <dbReference type="ChEBI" id="CHEBI:29999"/>
        <dbReference type="ChEBI" id="CHEBI:30616"/>
        <dbReference type="ChEBI" id="CHEBI:83421"/>
        <dbReference type="ChEBI" id="CHEBI:456216"/>
        <dbReference type="EC" id="2.7.11.1"/>
    </reaction>
</comment>
<comment type="catalytic activity">
    <reaction>
        <text>L-threonyl-[protein] + ATP = O-phospho-L-threonyl-[protein] + ADP + H(+)</text>
        <dbReference type="Rhea" id="RHEA:46608"/>
        <dbReference type="Rhea" id="RHEA-COMP:11060"/>
        <dbReference type="Rhea" id="RHEA-COMP:11605"/>
        <dbReference type="ChEBI" id="CHEBI:15378"/>
        <dbReference type="ChEBI" id="CHEBI:30013"/>
        <dbReference type="ChEBI" id="CHEBI:30616"/>
        <dbReference type="ChEBI" id="CHEBI:61977"/>
        <dbReference type="ChEBI" id="CHEBI:456216"/>
        <dbReference type="EC" id="2.7.11.1"/>
    </reaction>
</comment>
<comment type="activity regulation">
    <text evidence="13">Activated by calcium. Autophosphorylation may play an important role in the regulation of the kinase activity.</text>
</comment>
<comment type="subunit">
    <text evidence="11 14">Interacts with 14-3-3 proteins.</text>
</comment>
<comment type="interaction">
    <interactant intactId="EBI-2357775">
        <id>Q06850</id>
    </interactant>
    <interactant intactId="EBI-2309089">
        <id>Q946J8</id>
        <label>LHP1</label>
    </interactant>
    <organismsDiffer>false</organismsDiffer>
    <experiments>3</experiments>
</comment>
<comment type="subcellular location">
    <subcellularLocation>
        <location evidence="9">Peroxisome membrane</location>
        <topology evidence="9">Lipid-anchor</topology>
    </subcellularLocation>
</comment>
<comment type="domain">
    <text evidence="7">There are 3 contiguous domains conserved in the CDPK subfamily: a kinase domain, an autoinhibitory (junction) domain and a calmodulin-like domain. The autoinhibitory domain (414-444) inactivates kinase activity under calcium-free conditions.</text>
</comment>
<comment type="similarity">
    <text evidence="3">Belongs to the protein kinase superfamily. Ser/Thr protein kinase family. CDPK subfamily.</text>
</comment>
<keyword id="KW-0002">3D-structure</keyword>
<keyword id="KW-0067">ATP-binding</keyword>
<keyword id="KW-0106">Calcium</keyword>
<keyword id="KW-0418">Kinase</keyword>
<keyword id="KW-0449">Lipoprotein</keyword>
<keyword id="KW-0472">Membrane</keyword>
<keyword id="KW-0479">Metal-binding</keyword>
<keyword id="KW-0519">Myristate</keyword>
<keyword id="KW-0547">Nucleotide-binding</keyword>
<keyword id="KW-0564">Palmitate</keyword>
<keyword id="KW-0576">Peroxisome</keyword>
<keyword id="KW-0597">Phosphoprotein</keyword>
<keyword id="KW-1185">Reference proteome</keyword>
<keyword id="KW-0677">Repeat</keyword>
<keyword id="KW-0723">Serine/threonine-protein kinase</keyword>
<keyword id="KW-0808">Transferase</keyword>
<protein>
    <recommendedName>
        <fullName>Calcium-dependent protein kinase 1</fullName>
        <shortName>AtCDPK 1</shortName>
        <shortName>CDPK 1</shortName>
        <ecNumber>2.7.11.1</ecNumber>
    </recommendedName>
    <alternativeName>
        <fullName>Calcium-dependent protein kinase isoform AK1</fullName>
    </alternativeName>
</protein>
<organism>
    <name type="scientific">Arabidopsis thaliana</name>
    <name type="common">Mouse-ear cress</name>
    <dbReference type="NCBI Taxonomy" id="3702"/>
    <lineage>
        <taxon>Eukaryota</taxon>
        <taxon>Viridiplantae</taxon>
        <taxon>Streptophyta</taxon>
        <taxon>Embryophyta</taxon>
        <taxon>Tracheophyta</taxon>
        <taxon>Spermatophyta</taxon>
        <taxon>Magnoliopsida</taxon>
        <taxon>eudicotyledons</taxon>
        <taxon>Gunneridae</taxon>
        <taxon>Pentapetalae</taxon>
        <taxon>rosids</taxon>
        <taxon>malvids</taxon>
        <taxon>Brassicales</taxon>
        <taxon>Brassicaceae</taxon>
        <taxon>Camelineae</taxon>
        <taxon>Arabidopsis</taxon>
    </lineage>
</organism>
<name>CDPK1_ARATH</name>
<reference key="1">
    <citation type="journal article" date="1993" name="Biochemistry">
        <title>Calcium and lipid regulation of an Arabidopsis protein kinase expressed in Escherichia coli.</title>
        <authorList>
            <person name="Harper J.F."/>
            <person name="Binder B.M."/>
            <person name="Sussman M.R."/>
        </authorList>
    </citation>
    <scope>NUCLEOTIDE SEQUENCE [MRNA]</scope>
    <source>
        <strain>cv. Columbia</strain>
    </source>
</reference>
<reference key="2">
    <citation type="journal article" date="1997" name="DNA Res.">
        <title>Structural analysis of Arabidopsis thaliana chromosome 5. III. Sequence features of the regions of 1,191,918 bp covered by seventeen physically assigned P1 clones.</title>
        <authorList>
            <person name="Nakamura Y."/>
            <person name="Sato S."/>
            <person name="Kaneko T."/>
            <person name="Kotani H."/>
            <person name="Asamizu E."/>
            <person name="Miyajima N."/>
            <person name="Tabata S."/>
        </authorList>
    </citation>
    <scope>NUCLEOTIDE SEQUENCE [LARGE SCALE GENOMIC DNA]</scope>
    <source>
        <strain>cv. Columbia</strain>
    </source>
</reference>
<reference key="3">
    <citation type="journal article" date="2017" name="Plant J.">
        <title>Araport11: a complete reannotation of the Arabidopsis thaliana reference genome.</title>
        <authorList>
            <person name="Cheng C.Y."/>
            <person name="Krishnakumar V."/>
            <person name="Chan A.P."/>
            <person name="Thibaud-Nissen F."/>
            <person name="Schobel S."/>
            <person name="Town C.D."/>
        </authorList>
    </citation>
    <scope>GENOME REANNOTATION</scope>
    <source>
        <strain>cv. Columbia</strain>
    </source>
</reference>
<reference key="4">
    <citation type="journal article" date="2002" name="Science">
        <title>Functional annotation of a full-length Arabidopsis cDNA collection.</title>
        <authorList>
            <person name="Seki M."/>
            <person name="Narusaka M."/>
            <person name="Kamiya A."/>
            <person name="Ishida J."/>
            <person name="Satou M."/>
            <person name="Sakurai T."/>
            <person name="Nakajima M."/>
            <person name="Enju A."/>
            <person name="Akiyama K."/>
            <person name="Oono Y."/>
            <person name="Muramatsu M."/>
            <person name="Hayashizaki Y."/>
            <person name="Kawai J."/>
            <person name="Carninci P."/>
            <person name="Itoh M."/>
            <person name="Ishii Y."/>
            <person name="Arakawa T."/>
            <person name="Shibata K."/>
            <person name="Shinagawa A."/>
            <person name="Shinozaki K."/>
        </authorList>
    </citation>
    <scope>NUCLEOTIDE SEQUENCE [LARGE SCALE MRNA]</scope>
    <source>
        <strain>cv. Columbia</strain>
    </source>
</reference>
<reference key="5">
    <citation type="journal article" date="2003" name="Science">
        <title>Empirical analysis of transcriptional activity in the Arabidopsis genome.</title>
        <authorList>
            <person name="Yamada K."/>
            <person name="Lim J."/>
            <person name="Dale J.M."/>
            <person name="Chen H."/>
            <person name="Shinn P."/>
            <person name="Palm C.J."/>
            <person name="Southwick A.M."/>
            <person name="Wu H.C."/>
            <person name="Kim C.J."/>
            <person name="Nguyen M."/>
            <person name="Pham P.K."/>
            <person name="Cheuk R.F."/>
            <person name="Karlin-Newmann G."/>
            <person name="Liu S.X."/>
            <person name="Lam B."/>
            <person name="Sakano H."/>
            <person name="Wu T."/>
            <person name="Yu G."/>
            <person name="Miranda M."/>
            <person name="Quach H.L."/>
            <person name="Tripp M."/>
            <person name="Chang C.H."/>
            <person name="Lee J.M."/>
            <person name="Toriumi M.J."/>
            <person name="Chan M.M."/>
            <person name="Tang C.C."/>
            <person name="Onodera C.S."/>
            <person name="Deng J.M."/>
            <person name="Akiyama K."/>
            <person name="Ansari Y."/>
            <person name="Arakawa T."/>
            <person name="Banh J."/>
            <person name="Banno F."/>
            <person name="Bowser L."/>
            <person name="Brooks S.Y."/>
            <person name="Carninci P."/>
            <person name="Chao Q."/>
            <person name="Choy N."/>
            <person name="Enju A."/>
            <person name="Goldsmith A.D."/>
            <person name="Gurjal M."/>
            <person name="Hansen N.F."/>
            <person name="Hayashizaki Y."/>
            <person name="Johnson-Hopson C."/>
            <person name="Hsuan V.W."/>
            <person name="Iida K."/>
            <person name="Karnes M."/>
            <person name="Khan S."/>
            <person name="Koesema E."/>
            <person name="Ishida J."/>
            <person name="Jiang P.X."/>
            <person name="Jones T."/>
            <person name="Kawai J."/>
            <person name="Kamiya A."/>
            <person name="Meyers C."/>
            <person name="Nakajima M."/>
            <person name="Narusaka M."/>
            <person name="Seki M."/>
            <person name="Sakurai T."/>
            <person name="Satou M."/>
            <person name="Tamse R."/>
            <person name="Vaysberg M."/>
            <person name="Wallender E.K."/>
            <person name="Wong C."/>
            <person name="Yamamura Y."/>
            <person name="Yuan S."/>
            <person name="Shinozaki K."/>
            <person name="Davis R.W."/>
            <person name="Theologis A."/>
            <person name="Ecker J.R."/>
        </authorList>
    </citation>
    <scope>NUCLEOTIDE SEQUENCE [LARGE SCALE MRNA]</scope>
    <source>
        <strain>cv. Columbia</strain>
    </source>
</reference>
<reference key="6">
    <citation type="journal article" date="1994" name="Biochemistry">
        <title>Genetic identification of an autoinhibitor in CDPK, a protein kinase with a calmodulin-like domain.</title>
        <authorList>
            <person name="Harper J.F."/>
            <person name="Huang J.F."/>
            <person name="Lloyd S.J."/>
        </authorList>
    </citation>
    <scope>FUNCTION</scope>
</reference>
<reference key="7">
    <citation type="journal article" date="1996" name="Biochemistry">
        <title>Activation of a Ca(2+)-dependent protein kinase involves intramolecular binding of a calmodulin-like regulatory domain.</title>
        <authorList>
            <person name="Huang J.F."/>
            <person name="Teyton L."/>
            <person name="Harper J.F."/>
        </authorList>
    </citation>
    <scope>FUNCTION</scope>
    <scope>ACTIVATION BY CALCIUM</scope>
</reference>
<reference key="8">
    <citation type="journal article" date="1998" name="FEBS Lett.">
        <title>14-3-3 proteins activate a plant calcium-dependent protein kinase (CDPK).</title>
        <authorList>
            <person name="Camoni L."/>
            <person name="Harper J.F."/>
            <person name="Palmgren M.G."/>
        </authorList>
    </citation>
    <scope>INTERACTION WITH 14-3-3 PROTEINS</scope>
</reference>
<reference key="9">
    <citation type="journal article" date="2000" name="Biochemistry">
        <title>Intramolecular activation of a Ca(2+)-dependent protein kinase is disrupted by insertions in the tether that connects the calmodulin-like domain to the kinase.</title>
        <authorList>
            <person name="Vitart V."/>
            <person name="Christodoulou J."/>
            <person name="Huang J.F."/>
            <person name="Chazin W.J."/>
            <person name="Harper J.F."/>
        </authorList>
    </citation>
    <scope>FUNCTION</scope>
    <scope>MUTAGENESIS OF PHE-436 AND 443-VAL--ILE-444</scope>
</reference>
<reference key="10">
    <citation type="journal article" date="2000" name="Proc. Natl. Acad. Sci. U.S.A.">
        <title>A calcium-dependent protein kinase can inhibit a calmodulin-stimulated Ca2+ pump (ACA2) located in the endoplasmic reticulum of Arabidopsis.</title>
        <authorList>
            <person name="Hwang I."/>
            <person name="Sze H."/>
            <person name="Harper J.F."/>
        </authorList>
    </citation>
    <scope>FUNCTION</scope>
</reference>
<reference key="11">
    <citation type="journal article" date="2001" name="New Phytol.">
        <title>The CDPK superfamily of protein kinases.</title>
        <authorList>
            <person name="Harmon A.C."/>
            <person name="Gribskov M."/>
            <person name="Gubrium E."/>
            <person name="Harper J.F."/>
        </authorList>
    </citation>
    <scope>GENE FAMILY</scope>
    <scope>NOMENCLATURE</scope>
</reference>
<reference key="12">
    <citation type="journal article" date="2002" name="Plant Physiol.">
        <title>Calcium signaling through protein kinases. The Arabidopsis calcium-dependent protein kinase gene family.</title>
        <authorList>
            <person name="Cheng S.-H."/>
            <person name="Willmann M.R."/>
            <person name="Chen H.-C."/>
            <person name="Sheen J."/>
        </authorList>
    </citation>
    <scope>GENE FAMILY</scope>
    <scope>NOMENCLATURE</scope>
</reference>
<reference key="13">
    <citation type="journal article" date="2003" name="Plant Physiol.">
        <title>The Arabidopsis CDPK-SnRK superfamily of protein kinases.</title>
        <authorList>
            <person name="Hrabak E.M."/>
            <person name="Chan C.W.M."/>
            <person name="Gribskov M."/>
            <person name="Harper J.F."/>
            <person name="Choi J.H."/>
            <person name="Halford N."/>
            <person name="Kudla J."/>
            <person name="Luan S."/>
            <person name="Nimmo H.G."/>
            <person name="Sussman M.R."/>
            <person name="Thomas M."/>
            <person name="Walker-Simmons K."/>
            <person name="Zhu J.-K."/>
            <person name="Harmon A.C."/>
        </authorList>
    </citation>
    <scope>GENE FAMILY</scope>
    <scope>NOMENCLATURE</scope>
</reference>
<reference key="14">
    <citation type="journal article" date="2003" name="Plant Physiol.">
        <title>Subcellular targeting of nine calcium-dependent protein kinase isoforms from Arabidopsis.</title>
        <authorList>
            <person name="Dammann C."/>
            <person name="Ichida A."/>
            <person name="Hong B."/>
            <person name="Romanowsky S.M."/>
            <person name="Hrabak E.M."/>
            <person name="Harmon A.C."/>
            <person name="Pickard B.G."/>
            <person name="Harper J.F."/>
        </authorList>
    </citation>
    <scope>SUBCELLULAR LOCATION</scope>
    <scope>MYRISTOYLATION AT GLY-2</scope>
    <scope>PALMITOYLATION AT CYS-5</scope>
</reference>
<reference key="15">
    <citation type="journal article" date="2004" name="J. Biol. Chem.">
        <title>Evidence for differing roles for each lobe of the calmodulin-like domain in a calcium-dependent protein kinase.</title>
        <authorList>
            <person name="Christodoulou J."/>
            <person name="Malmendal A."/>
            <person name="Harper J.F."/>
            <person name="Chazin W.J."/>
        </authorList>
    </citation>
    <scope>CALCIUM-BINDING</scope>
    <scope>KINASE ACTIVATION</scope>
</reference>
<reference key="16">
    <citation type="journal article" date="2006" name="J. Mol. Biol.">
        <title>Structure of the regulatory apparatus of a calcium-dependent protein kinase (CDPK): a novel mode of calmodulin-target recognition.</title>
        <authorList>
            <person name="Chandran V."/>
            <person name="Stollar E.J."/>
            <person name="Lindorff-Larsen K."/>
            <person name="Harper J.F."/>
            <person name="Chazin W.J."/>
            <person name="Dobson C.M."/>
            <person name="Luisi B.F."/>
            <person name="Christodoulou J."/>
        </authorList>
    </citation>
    <scope>X-RAY CRYSTALLOGRAPHY (2.0 ANGSTROMS) OF 428-593 IN COMPLEX WITH CALCIUM ION</scope>
</reference>